<name>BLH8_ARATH</name>
<sequence>MDMIKPDFQQIRRDKFRVEQMNDFPNTWTQQQHQNIRIPNNLDLIGILQNQISVPVQTDLYQDSAATFMNMPQSIHRDPQGPSNWRISDLSQPSTVNHGYDQAGIRPNNVADLLSDHFSSRNQILDRPLYVGRDSIPQSSMIRRSEVSCLDDNQKGCVTVACSGTGNEILRSSYDQGSSSGSYRGEFSFLPSLENQSVAHNASNWNHGPVNVTATSHTNSKKGFPLSLLSDIPPSRDVGNAAVLSTMNIHGPLGPFTGYASILKSSRFLEPAQKMLEEFCISYASKIISRSESTSMEDDDDDDDNLSGFSSSSEPLEPKNRLKKAKLLFLQEEVCKWYKLYNHQLQTVMSSFNTVAGLNTATPYISLALKRTSRSFKALRTAIAEHVKQISSHSSNGNNNNRFQKRQRSLIGNNVGFESQQQHIWRPQRGLPERAVAVLRAWLFDHFLHPYPTDSDKQMLATQTGLSRNQVSNWFINARVRLWKPMVEEIHTLETKAIKNADTSHNIEPSNRPNTVSSPSHEQTLTGLSGTKRSRLEYMDMVGFNRGNVSLTLELRRGVDNVIQTQTQDHQFGTGSQMFHDFVG</sequence>
<feature type="chain" id="PRO_0000315464" description="BEL1-like homeodomain protein 8">
    <location>
        <begin position="1"/>
        <end position="584"/>
    </location>
</feature>
<feature type="DNA-binding region" description="Homeobox" evidence="1">
    <location>
        <begin position="424"/>
        <end position="486"/>
    </location>
</feature>
<feature type="region of interest" description="SR/KY domain">
    <location>
        <begin position="266"/>
        <end position="282"/>
    </location>
</feature>
<feature type="region of interest" description="Disordered" evidence="2">
    <location>
        <begin position="292"/>
        <end position="317"/>
    </location>
</feature>
<feature type="region of interest" description="BELL domain">
    <location>
        <begin position="316"/>
        <end position="387"/>
    </location>
</feature>
<feature type="region of interest" description="Disordered" evidence="2">
    <location>
        <begin position="503"/>
        <end position="529"/>
    </location>
</feature>
<feature type="compositionally biased region" description="Acidic residues" evidence="2">
    <location>
        <begin position="295"/>
        <end position="305"/>
    </location>
</feature>
<dbReference type="EMBL" id="AC006929">
    <property type="protein sequence ID" value="AAD21503.1"/>
    <property type="molecule type" value="Genomic_DNA"/>
</dbReference>
<dbReference type="EMBL" id="CP002685">
    <property type="protein sequence ID" value="AEC08067.1"/>
    <property type="molecule type" value="Genomic_DNA"/>
</dbReference>
<dbReference type="EMBL" id="AK119153">
    <property type="protein sequence ID" value="BAC43723.1"/>
    <property type="molecule type" value="mRNA"/>
</dbReference>
<dbReference type="EMBL" id="BT005921">
    <property type="protein sequence ID" value="AAO64856.1"/>
    <property type="molecule type" value="mRNA"/>
</dbReference>
<dbReference type="PIR" id="D84679">
    <property type="entry name" value="D84679"/>
</dbReference>
<dbReference type="RefSeq" id="NP_180366.1">
    <property type="nucleotide sequence ID" value="NM_128358.3"/>
</dbReference>
<dbReference type="SMR" id="Q9SJJ3"/>
<dbReference type="BioGRID" id="2693">
    <property type="interactions" value="6"/>
</dbReference>
<dbReference type="FunCoup" id="Q9SJJ3">
    <property type="interactions" value="10"/>
</dbReference>
<dbReference type="IntAct" id="Q9SJJ3">
    <property type="interactions" value="9"/>
</dbReference>
<dbReference type="STRING" id="3702.Q9SJJ3"/>
<dbReference type="GlyGen" id="Q9SJJ3">
    <property type="glycosylation" value="1 site"/>
</dbReference>
<dbReference type="PaxDb" id="3702-AT2G27990.1"/>
<dbReference type="ProteomicsDB" id="240803"/>
<dbReference type="EnsemblPlants" id="AT2G27990.1">
    <property type="protein sequence ID" value="AT2G27990.1"/>
    <property type="gene ID" value="AT2G27990"/>
</dbReference>
<dbReference type="GeneID" id="817343"/>
<dbReference type="Gramene" id="AT2G27990.1">
    <property type="protein sequence ID" value="AT2G27990.1"/>
    <property type="gene ID" value="AT2G27990"/>
</dbReference>
<dbReference type="KEGG" id="ath:AT2G27990"/>
<dbReference type="Araport" id="AT2G27990"/>
<dbReference type="TAIR" id="AT2G27990">
    <property type="gene designation" value="BLH8"/>
</dbReference>
<dbReference type="eggNOG" id="KOG0773">
    <property type="taxonomic scope" value="Eukaryota"/>
</dbReference>
<dbReference type="HOGENOM" id="CLU_467247_0_0_1"/>
<dbReference type="InParanoid" id="Q9SJJ3"/>
<dbReference type="PhylomeDB" id="Q9SJJ3"/>
<dbReference type="PRO" id="PR:Q9SJJ3"/>
<dbReference type="Proteomes" id="UP000006548">
    <property type="component" value="Chromosome 2"/>
</dbReference>
<dbReference type="ExpressionAtlas" id="Q9SJJ3">
    <property type="expression patterns" value="baseline and differential"/>
</dbReference>
<dbReference type="GO" id="GO:0005634">
    <property type="term" value="C:nucleus"/>
    <property type="evidence" value="ECO:0007669"/>
    <property type="project" value="UniProtKB-SubCell"/>
</dbReference>
<dbReference type="GO" id="GO:0003677">
    <property type="term" value="F:DNA binding"/>
    <property type="evidence" value="ECO:0007669"/>
    <property type="project" value="UniProtKB-KW"/>
</dbReference>
<dbReference type="GO" id="GO:0003700">
    <property type="term" value="F:DNA-binding transcription factor activity"/>
    <property type="evidence" value="ECO:0000250"/>
    <property type="project" value="TAIR"/>
</dbReference>
<dbReference type="GO" id="GO:0010229">
    <property type="term" value="P:inflorescence development"/>
    <property type="evidence" value="ECO:0000316"/>
    <property type="project" value="TAIR"/>
</dbReference>
<dbReference type="GO" id="GO:0080006">
    <property type="term" value="P:internode patterning"/>
    <property type="evidence" value="ECO:0000316"/>
    <property type="project" value="TAIR"/>
</dbReference>
<dbReference type="GO" id="GO:0010076">
    <property type="term" value="P:maintenance of floral meristem identity"/>
    <property type="evidence" value="ECO:0000316"/>
    <property type="project" value="TAIR"/>
</dbReference>
<dbReference type="GO" id="GO:0010077">
    <property type="term" value="P:maintenance of inflorescence meristem identity"/>
    <property type="evidence" value="ECO:0000316"/>
    <property type="project" value="TAIR"/>
</dbReference>
<dbReference type="GO" id="GO:0007389">
    <property type="term" value="P:pattern specification process"/>
    <property type="evidence" value="ECO:0000316"/>
    <property type="project" value="TAIR"/>
</dbReference>
<dbReference type="GO" id="GO:1905393">
    <property type="term" value="P:plant organ formation"/>
    <property type="evidence" value="ECO:0000316"/>
    <property type="project" value="TAIR"/>
</dbReference>
<dbReference type="GO" id="GO:0010223">
    <property type="term" value="P:secondary shoot formation"/>
    <property type="evidence" value="ECO:0000316"/>
    <property type="project" value="TAIR"/>
</dbReference>
<dbReference type="GO" id="GO:0010228">
    <property type="term" value="P:vegetative to reproductive phase transition of meristem"/>
    <property type="evidence" value="ECO:0000316"/>
    <property type="project" value="TAIR"/>
</dbReference>
<dbReference type="CDD" id="cd00086">
    <property type="entry name" value="homeodomain"/>
    <property type="match status" value="1"/>
</dbReference>
<dbReference type="FunFam" id="1.10.10.60:FF:000117">
    <property type="entry name" value="BEL1-like homeodomain protein 9"/>
    <property type="match status" value="1"/>
</dbReference>
<dbReference type="Gene3D" id="1.10.10.60">
    <property type="entry name" value="Homeodomain-like"/>
    <property type="match status" value="1"/>
</dbReference>
<dbReference type="InterPro" id="IPR001356">
    <property type="entry name" value="HD"/>
</dbReference>
<dbReference type="InterPro" id="IPR009057">
    <property type="entry name" value="Homeodomain-like_sf"/>
</dbReference>
<dbReference type="InterPro" id="IPR008422">
    <property type="entry name" value="KN_HD"/>
</dbReference>
<dbReference type="InterPro" id="IPR006563">
    <property type="entry name" value="POX_dom"/>
</dbReference>
<dbReference type="InterPro" id="IPR050224">
    <property type="entry name" value="TALE_homeobox"/>
</dbReference>
<dbReference type="PANTHER" id="PTHR11850">
    <property type="entry name" value="HOMEOBOX PROTEIN TRANSCRIPTION FACTORS"/>
    <property type="match status" value="1"/>
</dbReference>
<dbReference type="Pfam" id="PF05920">
    <property type="entry name" value="Homeobox_KN"/>
    <property type="match status" value="1"/>
</dbReference>
<dbReference type="Pfam" id="PF07526">
    <property type="entry name" value="POX"/>
    <property type="match status" value="1"/>
</dbReference>
<dbReference type="SMART" id="SM00389">
    <property type="entry name" value="HOX"/>
    <property type="match status" value="1"/>
</dbReference>
<dbReference type="SMART" id="SM00574">
    <property type="entry name" value="POX"/>
    <property type="match status" value="1"/>
</dbReference>
<dbReference type="SUPFAM" id="SSF46689">
    <property type="entry name" value="Homeodomain-like"/>
    <property type="match status" value="1"/>
</dbReference>
<dbReference type="PROSITE" id="PS00027">
    <property type="entry name" value="HOMEOBOX_1"/>
    <property type="match status" value="1"/>
</dbReference>
<dbReference type="PROSITE" id="PS50071">
    <property type="entry name" value="HOMEOBOX_2"/>
    <property type="match status" value="1"/>
</dbReference>
<keyword id="KW-0238">DNA-binding</keyword>
<keyword id="KW-0371">Homeobox</keyword>
<keyword id="KW-0539">Nucleus</keyword>
<keyword id="KW-1185">Reference proteome</keyword>
<keyword id="KW-0804">Transcription</keyword>
<keyword id="KW-0805">Transcription regulation</keyword>
<gene>
    <name type="primary">BLH8</name>
    <name type="synonym">PNF</name>
    <name type="ordered locus">At2g27990</name>
    <name type="ORF">T1E2.9</name>
</gene>
<reference key="1">
    <citation type="journal article" date="1999" name="Nature">
        <title>Sequence and analysis of chromosome 2 of the plant Arabidopsis thaliana.</title>
        <authorList>
            <person name="Lin X."/>
            <person name="Kaul S."/>
            <person name="Rounsley S.D."/>
            <person name="Shea T.P."/>
            <person name="Benito M.-I."/>
            <person name="Town C.D."/>
            <person name="Fujii C.Y."/>
            <person name="Mason T.M."/>
            <person name="Bowman C.L."/>
            <person name="Barnstead M.E."/>
            <person name="Feldblyum T.V."/>
            <person name="Buell C.R."/>
            <person name="Ketchum K.A."/>
            <person name="Lee J.J."/>
            <person name="Ronning C.M."/>
            <person name="Koo H.L."/>
            <person name="Moffat K.S."/>
            <person name="Cronin L.A."/>
            <person name="Shen M."/>
            <person name="Pai G."/>
            <person name="Van Aken S."/>
            <person name="Umayam L."/>
            <person name="Tallon L.J."/>
            <person name="Gill J.E."/>
            <person name="Adams M.D."/>
            <person name="Carrera A.J."/>
            <person name="Creasy T.H."/>
            <person name="Goodman H.M."/>
            <person name="Somerville C.R."/>
            <person name="Copenhaver G.P."/>
            <person name="Preuss D."/>
            <person name="Nierman W.C."/>
            <person name="White O."/>
            <person name="Eisen J.A."/>
            <person name="Salzberg S.L."/>
            <person name="Fraser C.M."/>
            <person name="Venter J.C."/>
        </authorList>
    </citation>
    <scope>NUCLEOTIDE SEQUENCE [LARGE SCALE GENOMIC DNA]</scope>
    <source>
        <strain>cv. Columbia</strain>
    </source>
</reference>
<reference key="2">
    <citation type="journal article" date="2017" name="Plant J.">
        <title>Araport11: a complete reannotation of the Arabidopsis thaliana reference genome.</title>
        <authorList>
            <person name="Cheng C.Y."/>
            <person name="Krishnakumar V."/>
            <person name="Chan A.P."/>
            <person name="Thibaud-Nissen F."/>
            <person name="Schobel S."/>
            <person name="Town C.D."/>
        </authorList>
    </citation>
    <scope>GENOME REANNOTATION</scope>
    <source>
        <strain>cv. Columbia</strain>
    </source>
</reference>
<reference key="3">
    <citation type="journal article" date="2002" name="Science">
        <title>Functional annotation of a full-length Arabidopsis cDNA collection.</title>
        <authorList>
            <person name="Seki M."/>
            <person name="Narusaka M."/>
            <person name="Kamiya A."/>
            <person name="Ishida J."/>
            <person name="Satou M."/>
            <person name="Sakurai T."/>
            <person name="Nakajima M."/>
            <person name="Enju A."/>
            <person name="Akiyama K."/>
            <person name="Oono Y."/>
            <person name="Muramatsu M."/>
            <person name="Hayashizaki Y."/>
            <person name="Kawai J."/>
            <person name="Carninci P."/>
            <person name="Itoh M."/>
            <person name="Ishii Y."/>
            <person name="Arakawa T."/>
            <person name="Shibata K."/>
            <person name="Shinagawa A."/>
            <person name="Shinozaki K."/>
        </authorList>
    </citation>
    <scope>NUCLEOTIDE SEQUENCE [LARGE SCALE MRNA]</scope>
    <source>
        <strain>cv. Columbia</strain>
    </source>
</reference>
<reference key="4">
    <citation type="journal article" date="2003" name="Science">
        <title>Empirical analysis of transcriptional activity in the Arabidopsis genome.</title>
        <authorList>
            <person name="Yamada K."/>
            <person name="Lim J."/>
            <person name="Dale J.M."/>
            <person name="Chen H."/>
            <person name="Shinn P."/>
            <person name="Palm C.J."/>
            <person name="Southwick A.M."/>
            <person name="Wu H.C."/>
            <person name="Kim C.J."/>
            <person name="Nguyen M."/>
            <person name="Pham P.K."/>
            <person name="Cheuk R.F."/>
            <person name="Karlin-Newmann G."/>
            <person name="Liu S.X."/>
            <person name="Lam B."/>
            <person name="Sakano H."/>
            <person name="Wu T."/>
            <person name="Yu G."/>
            <person name="Miranda M."/>
            <person name="Quach H.L."/>
            <person name="Tripp M."/>
            <person name="Chang C.H."/>
            <person name="Lee J.M."/>
            <person name="Toriumi M.J."/>
            <person name="Chan M.M."/>
            <person name="Tang C.C."/>
            <person name="Onodera C.S."/>
            <person name="Deng J.M."/>
            <person name="Akiyama K."/>
            <person name="Ansari Y."/>
            <person name="Arakawa T."/>
            <person name="Banh J."/>
            <person name="Banno F."/>
            <person name="Bowser L."/>
            <person name="Brooks S.Y."/>
            <person name="Carninci P."/>
            <person name="Chao Q."/>
            <person name="Choy N."/>
            <person name="Enju A."/>
            <person name="Goldsmith A.D."/>
            <person name="Gurjal M."/>
            <person name="Hansen N.F."/>
            <person name="Hayashizaki Y."/>
            <person name="Johnson-Hopson C."/>
            <person name="Hsuan V.W."/>
            <person name="Iida K."/>
            <person name="Karnes M."/>
            <person name="Khan S."/>
            <person name="Koesema E."/>
            <person name="Ishida J."/>
            <person name="Jiang P.X."/>
            <person name="Jones T."/>
            <person name="Kawai J."/>
            <person name="Kamiya A."/>
            <person name="Meyers C."/>
            <person name="Nakajima M."/>
            <person name="Narusaka M."/>
            <person name="Seki M."/>
            <person name="Sakurai T."/>
            <person name="Satou M."/>
            <person name="Tamse R."/>
            <person name="Vaysberg M."/>
            <person name="Wallender E.K."/>
            <person name="Wong C."/>
            <person name="Yamamura Y."/>
            <person name="Yuan S."/>
            <person name="Shinozaki K."/>
            <person name="Davis R.W."/>
            <person name="Theologis A."/>
            <person name="Ecker J.R."/>
        </authorList>
    </citation>
    <scope>NUCLEOTIDE SEQUENCE [LARGE SCALE MRNA]</scope>
    <source>
        <strain>cv. Columbia</strain>
    </source>
</reference>
<reference key="5">
    <citation type="journal article" date="2004" name="Curr. Biol.">
        <title>Competence to respond to floral inductive signals requires the homeobox genes PENNYWISE and POUND-FOOLISH.</title>
        <authorList>
            <person name="Smith H.M.S."/>
            <person name="Campbell B.C.C."/>
            <person name="Hake S."/>
        </authorList>
    </citation>
    <scope>GENE FAMILY ORGANIZATION</scope>
    <scope>FUNCTION</scope>
</reference>
<reference key="6">
    <citation type="journal article" date="2006" name="Planta">
        <title>Arabidopsis inflorescence architecture requires the activities of KNOX-BELL homeodomain heterodimers.</title>
        <authorList>
            <person name="Kanrar S."/>
            <person name="Onguka O."/>
            <person name="Smith H.M.S."/>
        </authorList>
    </citation>
    <scope>FUNCTION</scope>
    <scope>INTERACTION WITH STM AND KNAT1/BP</scope>
</reference>
<evidence type="ECO:0000255" key="1">
    <source>
        <dbReference type="PROSITE-ProRule" id="PRU00108"/>
    </source>
</evidence>
<evidence type="ECO:0000256" key="2">
    <source>
        <dbReference type="SAM" id="MobiDB-lite"/>
    </source>
</evidence>
<evidence type="ECO:0000269" key="3">
    <source>
    </source>
</evidence>
<evidence type="ECO:0000269" key="4">
    <source>
    </source>
</evidence>
<evidence type="ECO:0000305" key="5"/>
<organism>
    <name type="scientific">Arabidopsis thaliana</name>
    <name type="common">Mouse-ear cress</name>
    <dbReference type="NCBI Taxonomy" id="3702"/>
    <lineage>
        <taxon>Eukaryota</taxon>
        <taxon>Viridiplantae</taxon>
        <taxon>Streptophyta</taxon>
        <taxon>Embryophyta</taxon>
        <taxon>Tracheophyta</taxon>
        <taxon>Spermatophyta</taxon>
        <taxon>Magnoliopsida</taxon>
        <taxon>eudicotyledons</taxon>
        <taxon>Gunneridae</taxon>
        <taxon>Pentapetalae</taxon>
        <taxon>rosids</taxon>
        <taxon>malvids</taxon>
        <taxon>Brassicales</taxon>
        <taxon>Brassicaceae</taxon>
        <taxon>Camelineae</taxon>
        <taxon>Arabidopsis</taxon>
    </lineage>
</organism>
<proteinExistence type="evidence at protein level"/>
<accession>Q9SJJ3</accession>
<protein>
    <recommendedName>
        <fullName>BEL1-like homeodomain protein 8</fullName>
        <shortName>BEL1-like protein 8</shortName>
    </recommendedName>
    <alternativeName>
        <fullName>Protein POUND-FOOLISH</fullName>
    </alternativeName>
</protein>
<comment type="function">
    <text evidence="3 4">Required for specifying floral primordia and establishing early internode patterning events during inflorescence development.</text>
</comment>
<comment type="subunit">
    <text>May form heterodimeric complex with the TALE/KNOX proteins STM and KNAT1/BP.</text>
</comment>
<comment type="interaction">
    <interactant intactId="EBI-1154034">
        <id>Q9SJJ3</id>
    </interactant>
    <interactant intactId="EBI-530486">
        <id>P46639</id>
        <label>KNAT1</label>
    </interactant>
    <organismsDiffer>false</organismsDiffer>
    <experiments>3</experiments>
</comment>
<comment type="subcellular location">
    <subcellularLocation>
        <location evidence="5">Nucleus</location>
    </subcellularLocation>
</comment>
<comment type="domain">
    <text>The SR/KY and BELL domains are responsive for the interaction between the TALE/BELL proteins and the TALE/KNOX proteins.</text>
</comment>
<comment type="similarity">
    <text evidence="5">Belongs to the TALE/BELL homeobox family.</text>
</comment>